<gene>
    <name type="ordered locus">YPA_0370</name>
</gene>
<accession>Q1CB34</accession>
<sequence length="330" mass="35966">MAYHTPFAAQPPVASSGLPLTLISLDDWALVTLTGADRVKYLQGQVTADIDALSADQHVLCAHCDAKGKMWSNLRLFYRGEGLAFIERRSLLDNQLSELKKYAVFSKVVIEPQPDAVLIGVAGSQAKTALAEIFTELPSAEHPVTQMGNSTLLHFSLPAERFLLVTDTEQAQQLVEKLAGRAQFNDSKQWLALDIEAGFPIIDAANSAQFIPQATNIQALNGISFTKGCYTGQEMVARAKYRGANKRALYWLAGNASRVPAAGEDLEWQLGENWRRTGTVLSAIQLNDGTVWVQAVLNNDLAADSVLRVRDDALGTLAIQPLPYSLAEDK</sequence>
<reference key="1">
    <citation type="journal article" date="2006" name="J. Bacteriol.">
        <title>Complete genome sequence of Yersinia pestis strains Antiqua and Nepal516: evidence of gene reduction in an emerging pathogen.</title>
        <authorList>
            <person name="Chain P.S.G."/>
            <person name="Hu P."/>
            <person name="Malfatti S.A."/>
            <person name="Radnedge L."/>
            <person name="Larimer F."/>
            <person name="Vergez L.M."/>
            <person name="Worsham P."/>
            <person name="Chu M.C."/>
            <person name="Andersen G.L."/>
        </authorList>
    </citation>
    <scope>NUCLEOTIDE SEQUENCE [LARGE SCALE GENOMIC DNA]</scope>
    <source>
        <strain>Antiqua</strain>
    </source>
</reference>
<name>YGFZ_YERPA</name>
<proteinExistence type="inferred from homology"/>
<organism>
    <name type="scientific">Yersinia pestis bv. Antiqua (strain Antiqua)</name>
    <dbReference type="NCBI Taxonomy" id="360102"/>
    <lineage>
        <taxon>Bacteria</taxon>
        <taxon>Pseudomonadati</taxon>
        <taxon>Pseudomonadota</taxon>
        <taxon>Gammaproteobacteria</taxon>
        <taxon>Enterobacterales</taxon>
        <taxon>Yersiniaceae</taxon>
        <taxon>Yersinia</taxon>
    </lineage>
</organism>
<keyword id="KW-0963">Cytoplasm</keyword>
<keyword id="KW-0290">Folate-binding</keyword>
<keyword id="KW-0819">tRNA processing</keyword>
<protein>
    <recommendedName>
        <fullName evidence="1">tRNA-modifying protein YgfZ</fullName>
    </recommendedName>
</protein>
<comment type="function">
    <text evidence="1">Folate-binding protein involved in regulating the level of ATP-DnaA and in the modification of some tRNAs. It is probably a key factor in regulatory networks that act via tRNA modification, such as initiation of chromosomal replication.</text>
</comment>
<comment type="subcellular location">
    <subcellularLocation>
        <location evidence="1">Cytoplasm</location>
    </subcellularLocation>
</comment>
<comment type="similarity">
    <text evidence="1">Belongs to the tRNA-modifying YgfZ family.</text>
</comment>
<dbReference type="EMBL" id="CP000308">
    <property type="protein sequence ID" value="ABG12338.1"/>
    <property type="molecule type" value="Genomic_DNA"/>
</dbReference>
<dbReference type="SMR" id="Q1CB34"/>
<dbReference type="KEGG" id="ypa:YPA_0370"/>
<dbReference type="Proteomes" id="UP000001971">
    <property type="component" value="Chromosome"/>
</dbReference>
<dbReference type="GO" id="GO:0005737">
    <property type="term" value="C:cytoplasm"/>
    <property type="evidence" value="ECO:0007669"/>
    <property type="project" value="UniProtKB-SubCell"/>
</dbReference>
<dbReference type="GO" id="GO:0005542">
    <property type="term" value="F:folic acid binding"/>
    <property type="evidence" value="ECO:0007669"/>
    <property type="project" value="UniProtKB-UniRule"/>
</dbReference>
<dbReference type="GO" id="GO:0016226">
    <property type="term" value="P:iron-sulfur cluster assembly"/>
    <property type="evidence" value="ECO:0007669"/>
    <property type="project" value="TreeGrafter"/>
</dbReference>
<dbReference type="GO" id="GO:0009451">
    <property type="term" value="P:RNA modification"/>
    <property type="evidence" value="ECO:0007669"/>
    <property type="project" value="InterPro"/>
</dbReference>
<dbReference type="GO" id="GO:0008033">
    <property type="term" value="P:tRNA processing"/>
    <property type="evidence" value="ECO:0007669"/>
    <property type="project" value="UniProtKB-UniRule"/>
</dbReference>
<dbReference type="FunFam" id="2.40.30.160:FF:000001">
    <property type="entry name" value="tRNA-modifying protein YgfZ"/>
    <property type="match status" value="1"/>
</dbReference>
<dbReference type="FunFam" id="3.30.70.1400:FF:000002">
    <property type="entry name" value="tRNA-modifying protein YgfZ"/>
    <property type="match status" value="1"/>
</dbReference>
<dbReference type="FunFam" id="3.30.70.1630:FF:000001">
    <property type="entry name" value="tRNA-modifying protein YgfZ"/>
    <property type="match status" value="1"/>
</dbReference>
<dbReference type="Gene3D" id="2.40.30.160">
    <property type="match status" value="1"/>
</dbReference>
<dbReference type="Gene3D" id="3.30.70.1630">
    <property type="match status" value="1"/>
</dbReference>
<dbReference type="Gene3D" id="3.30.70.1400">
    <property type="entry name" value="Aminomethyltransferase beta-barrel domains"/>
    <property type="match status" value="1"/>
</dbReference>
<dbReference type="HAMAP" id="MF_01175">
    <property type="entry name" value="tRNA_modifying_YgfZ"/>
    <property type="match status" value="1"/>
</dbReference>
<dbReference type="InterPro" id="IPR029043">
    <property type="entry name" value="GcvT/YgfZ_C"/>
</dbReference>
<dbReference type="InterPro" id="IPR023758">
    <property type="entry name" value="tRNA-modifying_YgfZ"/>
</dbReference>
<dbReference type="InterPro" id="IPR045179">
    <property type="entry name" value="YgfZ/GcvT"/>
</dbReference>
<dbReference type="InterPro" id="IPR017703">
    <property type="entry name" value="YgfZ/GcvT_CS"/>
</dbReference>
<dbReference type="InterPro" id="IPR048451">
    <property type="entry name" value="YgfZ_barrel"/>
</dbReference>
<dbReference type="NCBIfam" id="NF007110">
    <property type="entry name" value="PRK09559.1"/>
    <property type="match status" value="1"/>
</dbReference>
<dbReference type="NCBIfam" id="TIGR03317">
    <property type="entry name" value="ygfZ_signature"/>
    <property type="match status" value="1"/>
</dbReference>
<dbReference type="PANTHER" id="PTHR22602">
    <property type="entry name" value="TRANSFERASE CAF17, MITOCHONDRIAL-RELATED"/>
    <property type="match status" value="1"/>
</dbReference>
<dbReference type="PANTHER" id="PTHR22602:SF0">
    <property type="entry name" value="TRANSFERASE CAF17, MITOCHONDRIAL-RELATED"/>
    <property type="match status" value="1"/>
</dbReference>
<dbReference type="Pfam" id="PF21130">
    <property type="entry name" value="YgfZ_barrel"/>
    <property type="match status" value="1"/>
</dbReference>
<dbReference type="SUPFAM" id="SSF101790">
    <property type="entry name" value="Aminomethyltransferase beta-barrel domain"/>
    <property type="match status" value="1"/>
</dbReference>
<dbReference type="SUPFAM" id="SSF103025">
    <property type="entry name" value="Folate-binding domain"/>
    <property type="match status" value="1"/>
</dbReference>
<feature type="chain" id="PRO_0000262909" description="tRNA-modifying protein YgfZ">
    <location>
        <begin position="1"/>
        <end position="330"/>
    </location>
</feature>
<feature type="binding site" evidence="1">
    <location>
        <position position="28"/>
    </location>
    <ligand>
        <name>folate</name>
        <dbReference type="ChEBI" id="CHEBI:62501"/>
    </ligand>
</feature>
<feature type="binding site" evidence="1">
    <location>
        <position position="190"/>
    </location>
    <ligand>
        <name>folate</name>
        <dbReference type="ChEBI" id="CHEBI:62501"/>
    </ligand>
</feature>
<evidence type="ECO:0000255" key="1">
    <source>
        <dbReference type="HAMAP-Rule" id="MF_01175"/>
    </source>
</evidence>